<proteinExistence type="inferred from homology"/>
<dbReference type="EMBL" id="CH476603">
    <property type="protein sequence ID" value="EAU32717.1"/>
    <property type="molecule type" value="Genomic_DNA"/>
</dbReference>
<dbReference type="RefSeq" id="XP_001210019.1">
    <property type="nucleotide sequence ID" value="XM_001210019.1"/>
</dbReference>
<dbReference type="STRING" id="341663.Q0CG59"/>
<dbReference type="EnsemblFungi" id="EAU32717">
    <property type="protein sequence ID" value="EAU32717"/>
    <property type="gene ID" value="ATEG_07333"/>
</dbReference>
<dbReference type="GeneID" id="4319166"/>
<dbReference type="VEuPathDB" id="FungiDB:ATEG_07333"/>
<dbReference type="eggNOG" id="ENOG502QS9H">
    <property type="taxonomic scope" value="Eukaryota"/>
</dbReference>
<dbReference type="HOGENOM" id="CLU_015164_1_0_1"/>
<dbReference type="OMA" id="AAETKYW"/>
<dbReference type="OrthoDB" id="5319830at2759"/>
<dbReference type="Proteomes" id="UP000007963">
    <property type="component" value="Unassembled WGS sequence"/>
</dbReference>
<dbReference type="GO" id="GO:0070847">
    <property type="term" value="C:core mediator complex"/>
    <property type="evidence" value="ECO:0007669"/>
    <property type="project" value="TreeGrafter"/>
</dbReference>
<dbReference type="GO" id="GO:0016592">
    <property type="term" value="C:mediator complex"/>
    <property type="evidence" value="ECO:0007669"/>
    <property type="project" value="InterPro"/>
</dbReference>
<dbReference type="GO" id="GO:0003712">
    <property type="term" value="F:transcription coregulator activity"/>
    <property type="evidence" value="ECO:0007669"/>
    <property type="project" value="InterPro"/>
</dbReference>
<dbReference type="GO" id="GO:0006357">
    <property type="term" value="P:regulation of transcription by RNA polymerase II"/>
    <property type="evidence" value="ECO:0007669"/>
    <property type="project" value="InterPro"/>
</dbReference>
<dbReference type="Gene3D" id="6.10.250.2620">
    <property type="match status" value="1"/>
</dbReference>
<dbReference type="InterPro" id="IPR019313">
    <property type="entry name" value="Mediator_Med17"/>
</dbReference>
<dbReference type="PANTHER" id="PTHR13114">
    <property type="entry name" value="MEDIATOR OF RNA POLYMERASE II TRANSCRIPTION SUBUNIT 17"/>
    <property type="match status" value="1"/>
</dbReference>
<dbReference type="PANTHER" id="PTHR13114:SF7">
    <property type="entry name" value="MEDIATOR OF RNA POLYMERASE II TRANSCRIPTION SUBUNIT 17"/>
    <property type="match status" value="1"/>
</dbReference>
<dbReference type="Pfam" id="PF10156">
    <property type="entry name" value="Med17"/>
    <property type="match status" value="1"/>
</dbReference>
<gene>
    <name type="primary">srb4</name>
    <name type="synonym">med17</name>
    <name type="ORF">ATEG_07333</name>
</gene>
<sequence>MPDSLSLPLRPLIDKREHQDSLPVEIAQINAQWGAFRDVSEDSLRAQIEADKHKDPWAEDEESDGQSAADVDTSERLEQLYKRRAEITNFALQAHMEAMFALDFVSLLLSKYAPRQAETSMSAILKQVAPLGSLNAEVVNPPPKPESTAKDIKTVSRGWRLQNFDAAANRLLDAATRLESEVASETRYWEEVLAVKNKGWKVCRLPRERQALGVQYGFMEATPIFRDRGLAALRRADDGRLFLDKGLAPQRTRMLRVRVKHCGGISGCSKVQPAVTEDVESIENRILQARDTLYEEELFHEVFREARMLGNQGVITRQNLVQIPVSEEQDILLDLVDDQDLLSDETPMSHEHDTLANAISHSIHILLAYAHRQNLRRRTQPPPPLSTKRRHTPEYLLLRPVMAYLQHSSHVRWVESFLNDIHRVLQSAGLQCEFKATPFSSIRLPTKHTIPTVEALVQTFLAPLESTFSCKLPSSHGSFRVRVRTNAVVPPFGTHFDISVDMPEYPDIQPPSRIGLQEEVATALTHLTMLDILTAIRQDQKSAVEPSEDSKPTEQCLTWSAVYPHHGELVALSPTGPNKKIKVELSAQGLSVQSYTMRGEFTESIDEKASRAQSWKPDSTTPGSPGLMEFVRAV</sequence>
<feature type="chain" id="PRO_0000304712" description="Mediator of RNA polymerase II transcription subunit 17">
    <location>
        <begin position="1"/>
        <end position="634"/>
    </location>
</feature>
<feature type="region of interest" description="Disordered" evidence="2">
    <location>
        <begin position="51"/>
        <end position="73"/>
    </location>
</feature>
<feature type="region of interest" description="Disordered" evidence="2">
    <location>
        <begin position="606"/>
        <end position="626"/>
    </location>
</feature>
<feature type="compositionally biased region" description="Polar residues" evidence="2">
    <location>
        <begin position="611"/>
        <end position="623"/>
    </location>
</feature>
<name>MED17_ASPTN</name>
<reference key="1">
    <citation type="submission" date="2005-09" db="EMBL/GenBank/DDBJ databases">
        <title>Annotation of the Aspergillus terreus NIH2624 genome.</title>
        <authorList>
            <person name="Birren B.W."/>
            <person name="Lander E.S."/>
            <person name="Galagan J.E."/>
            <person name="Nusbaum C."/>
            <person name="Devon K."/>
            <person name="Henn M."/>
            <person name="Ma L.-J."/>
            <person name="Jaffe D.B."/>
            <person name="Butler J."/>
            <person name="Alvarez P."/>
            <person name="Gnerre S."/>
            <person name="Grabherr M."/>
            <person name="Kleber M."/>
            <person name="Mauceli E.W."/>
            <person name="Brockman W."/>
            <person name="Rounsley S."/>
            <person name="Young S.K."/>
            <person name="LaButti K."/>
            <person name="Pushparaj V."/>
            <person name="DeCaprio D."/>
            <person name="Crawford M."/>
            <person name="Koehrsen M."/>
            <person name="Engels R."/>
            <person name="Montgomery P."/>
            <person name="Pearson M."/>
            <person name="Howarth C."/>
            <person name="Larson L."/>
            <person name="Luoma S."/>
            <person name="White J."/>
            <person name="Alvarado L."/>
            <person name="Kodira C.D."/>
            <person name="Zeng Q."/>
            <person name="Oleary S."/>
            <person name="Yandava C."/>
            <person name="Denning D.W."/>
            <person name="Nierman W.C."/>
            <person name="Milne T."/>
            <person name="Madden K."/>
        </authorList>
    </citation>
    <scope>NUCLEOTIDE SEQUENCE [LARGE SCALE GENOMIC DNA]</scope>
    <source>
        <strain>NIH 2624 / FGSC A1156</strain>
    </source>
</reference>
<organism>
    <name type="scientific">Aspergillus terreus (strain NIH 2624 / FGSC A1156)</name>
    <dbReference type="NCBI Taxonomy" id="341663"/>
    <lineage>
        <taxon>Eukaryota</taxon>
        <taxon>Fungi</taxon>
        <taxon>Dikarya</taxon>
        <taxon>Ascomycota</taxon>
        <taxon>Pezizomycotina</taxon>
        <taxon>Eurotiomycetes</taxon>
        <taxon>Eurotiomycetidae</taxon>
        <taxon>Eurotiales</taxon>
        <taxon>Aspergillaceae</taxon>
        <taxon>Aspergillus</taxon>
        <taxon>Aspergillus subgen. Circumdati</taxon>
    </lineage>
</organism>
<protein>
    <recommendedName>
        <fullName>Mediator of RNA polymerase II transcription subunit 17</fullName>
    </recommendedName>
    <alternativeName>
        <fullName>Mediator complex subunit 17</fullName>
    </alternativeName>
</protein>
<evidence type="ECO:0000250" key="1"/>
<evidence type="ECO:0000256" key="2">
    <source>
        <dbReference type="SAM" id="MobiDB-lite"/>
    </source>
</evidence>
<evidence type="ECO:0000305" key="3"/>
<accession>Q0CG59</accession>
<comment type="function">
    <text evidence="1">Component of the Mediator complex, a coactivator involved in the regulated transcription of nearly all RNA polymerase II-dependent genes. Mediator functions as a bridge to convey information from gene-specific regulatory proteins to the basal RNA polymerase II transcription machinery. Mediator is recruited to promoters by direct interactions with regulatory proteins and serves as a scaffold for the assembly of a functional preinitiation complex with RNA polymerase II and the general transcription factors (By similarity).</text>
</comment>
<comment type="subunit">
    <text evidence="1">Component of the Mediator complex.</text>
</comment>
<comment type="subcellular location">
    <subcellularLocation>
        <location evidence="1">Nucleus</location>
    </subcellularLocation>
</comment>
<comment type="similarity">
    <text evidence="3">Belongs to the Mediator complex subunit 17 family.</text>
</comment>
<keyword id="KW-0010">Activator</keyword>
<keyword id="KW-0539">Nucleus</keyword>
<keyword id="KW-1185">Reference proteome</keyword>
<keyword id="KW-0804">Transcription</keyword>
<keyword id="KW-0805">Transcription regulation</keyword>